<name>TRPD_LEPBL</name>
<organism>
    <name type="scientific">Leptospira borgpetersenii serovar Hardjo-bovis (strain L550)</name>
    <dbReference type="NCBI Taxonomy" id="355276"/>
    <lineage>
        <taxon>Bacteria</taxon>
        <taxon>Pseudomonadati</taxon>
        <taxon>Spirochaetota</taxon>
        <taxon>Spirochaetia</taxon>
        <taxon>Leptospirales</taxon>
        <taxon>Leptospiraceae</taxon>
        <taxon>Leptospira</taxon>
    </lineage>
</organism>
<evidence type="ECO:0000255" key="1">
    <source>
        <dbReference type="HAMAP-Rule" id="MF_00211"/>
    </source>
</evidence>
<reference key="1">
    <citation type="journal article" date="2006" name="Proc. Natl. Acad. Sci. U.S.A.">
        <title>Genome reduction in Leptospira borgpetersenii reflects limited transmission potential.</title>
        <authorList>
            <person name="Bulach D.M."/>
            <person name="Zuerner R.L."/>
            <person name="Wilson P."/>
            <person name="Seemann T."/>
            <person name="McGrath A."/>
            <person name="Cullen P.A."/>
            <person name="Davis J."/>
            <person name="Johnson M."/>
            <person name="Kuczek E."/>
            <person name="Alt D.P."/>
            <person name="Peterson-Burch B."/>
            <person name="Coppel R.L."/>
            <person name="Rood J.I."/>
            <person name="Davies J.K."/>
            <person name="Adler B."/>
        </authorList>
    </citation>
    <scope>NUCLEOTIDE SEQUENCE [LARGE SCALE GENOMIC DNA]</scope>
    <source>
        <strain>L550</strain>
    </source>
</reference>
<proteinExistence type="inferred from homology"/>
<keyword id="KW-0028">Amino-acid biosynthesis</keyword>
<keyword id="KW-0057">Aromatic amino acid biosynthesis</keyword>
<keyword id="KW-0328">Glycosyltransferase</keyword>
<keyword id="KW-0460">Magnesium</keyword>
<keyword id="KW-0479">Metal-binding</keyword>
<keyword id="KW-0808">Transferase</keyword>
<keyword id="KW-0822">Tryptophan biosynthesis</keyword>
<comment type="function">
    <text evidence="1">Catalyzes the transfer of the phosphoribosyl group of 5-phosphorylribose-1-pyrophosphate (PRPP) to anthranilate to yield N-(5'-phosphoribosyl)-anthranilate (PRA).</text>
</comment>
<comment type="catalytic activity">
    <reaction evidence="1">
        <text>N-(5-phospho-beta-D-ribosyl)anthranilate + diphosphate = 5-phospho-alpha-D-ribose 1-diphosphate + anthranilate</text>
        <dbReference type="Rhea" id="RHEA:11768"/>
        <dbReference type="ChEBI" id="CHEBI:16567"/>
        <dbReference type="ChEBI" id="CHEBI:18277"/>
        <dbReference type="ChEBI" id="CHEBI:33019"/>
        <dbReference type="ChEBI" id="CHEBI:58017"/>
        <dbReference type="EC" id="2.4.2.18"/>
    </reaction>
</comment>
<comment type="cofactor">
    <cofactor evidence="1">
        <name>Mg(2+)</name>
        <dbReference type="ChEBI" id="CHEBI:18420"/>
    </cofactor>
    <text evidence="1">Binds 2 magnesium ions per monomer.</text>
</comment>
<comment type="pathway">
    <text evidence="1">Amino-acid biosynthesis; L-tryptophan biosynthesis; L-tryptophan from chorismate: step 2/5.</text>
</comment>
<comment type="subunit">
    <text evidence="1">Homodimer.</text>
</comment>
<comment type="similarity">
    <text evidence="1">Belongs to the anthranilate phosphoribosyltransferase family.</text>
</comment>
<accession>Q04ZD2</accession>
<gene>
    <name evidence="1" type="primary">trpD</name>
    <name type="ordered locus">LBL_2151</name>
</gene>
<sequence>MEPRAIVLKLIEHKHISVEEAEFFMNRVMKGEVSEILLSSFVTAMRAKGESVDEVLGCTLALRKNALKPKTVFPFDLLDTCGTGGDGQGTINVSTLSAITLASLGVKVAKHGNRSVSSHTGSSDILARLGYQTEATQEEVEAHLISRGFTFLFAPMWHPSMKYAGSVRKELGFRTVFNMIGPLSNPFSPQFQIIGVYQPELTELFIKVLQYLGLKRALVCHSRDGLDEFSIFQTTDYTLLENEVISRHSFDPRTLGFSSLKREEVYADSSEHAEVLARRVLNSEPIAGTHAVALNAGAGLFVMGKVKTIEQGYKIAWEALLSGKTRKYFEDLISKE</sequence>
<feature type="chain" id="PRO_1000043023" description="Anthranilate phosphoribosyltransferase">
    <location>
        <begin position="1"/>
        <end position="336"/>
    </location>
</feature>
<feature type="binding site" evidence="1">
    <location>
        <position position="82"/>
    </location>
    <ligand>
        <name>5-phospho-alpha-D-ribose 1-diphosphate</name>
        <dbReference type="ChEBI" id="CHEBI:58017"/>
    </ligand>
</feature>
<feature type="binding site" evidence="1">
    <location>
        <position position="82"/>
    </location>
    <ligand>
        <name>anthranilate</name>
        <dbReference type="ChEBI" id="CHEBI:16567"/>
        <label>1</label>
    </ligand>
</feature>
<feature type="binding site" evidence="1">
    <location>
        <begin position="85"/>
        <end position="86"/>
    </location>
    <ligand>
        <name>5-phospho-alpha-D-ribose 1-diphosphate</name>
        <dbReference type="ChEBI" id="CHEBI:58017"/>
    </ligand>
</feature>
<feature type="binding site" evidence="1">
    <location>
        <position position="90"/>
    </location>
    <ligand>
        <name>5-phospho-alpha-D-ribose 1-diphosphate</name>
        <dbReference type="ChEBI" id="CHEBI:58017"/>
    </ligand>
</feature>
<feature type="binding site" evidence="1">
    <location>
        <begin position="92"/>
        <end position="95"/>
    </location>
    <ligand>
        <name>5-phospho-alpha-D-ribose 1-diphosphate</name>
        <dbReference type="ChEBI" id="CHEBI:58017"/>
    </ligand>
</feature>
<feature type="binding site" evidence="1">
    <location>
        <position position="94"/>
    </location>
    <ligand>
        <name>Mg(2+)</name>
        <dbReference type="ChEBI" id="CHEBI:18420"/>
        <label>1</label>
    </ligand>
</feature>
<feature type="binding site" evidence="1">
    <location>
        <begin position="110"/>
        <end position="118"/>
    </location>
    <ligand>
        <name>5-phospho-alpha-D-ribose 1-diphosphate</name>
        <dbReference type="ChEBI" id="CHEBI:58017"/>
    </ligand>
</feature>
<feature type="binding site" evidence="1">
    <location>
        <position position="113"/>
    </location>
    <ligand>
        <name>anthranilate</name>
        <dbReference type="ChEBI" id="CHEBI:16567"/>
        <label>1</label>
    </ligand>
</feature>
<feature type="binding site" evidence="1">
    <location>
        <position position="122"/>
    </location>
    <ligand>
        <name>5-phospho-alpha-D-ribose 1-diphosphate</name>
        <dbReference type="ChEBI" id="CHEBI:58017"/>
    </ligand>
</feature>
<feature type="binding site" evidence="1">
    <location>
        <position position="168"/>
    </location>
    <ligand>
        <name>anthranilate</name>
        <dbReference type="ChEBI" id="CHEBI:16567"/>
        <label>2</label>
    </ligand>
</feature>
<feature type="binding site" evidence="1">
    <location>
        <position position="227"/>
    </location>
    <ligand>
        <name>Mg(2+)</name>
        <dbReference type="ChEBI" id="CHEBI:18420"/>
        <label>2</label>
    </ligand>
</feature>
<feature type="binding site" evidence="1">
    <location>
        <position position="228"/>
    </location>
    <ligand>
        <name>Mg(2+)</name>
        <dbReference type="ChEBI" id="CHEBI:18420"/>
        <label>1</label>
    </ligand>
</feature>
<feature type="binding site" evidence="1">
    <location>
        <position position="228"/>
    </location>
    <ligand>
        <name>Mg(2+)</name>
        <dbReference type="ChEBI" id="CHEBI:18420"/>
        <label>2</label>
    </ligand>
</feature>
<protein>
    <recommendedName>
        <fullName evidence="1">Anthranilate phosphoribosyltransferase</fullName>
        <ecNumber evidence="1">2.4.2.18</ecNumber>
    </recommendedName>
</protein>
<dbReference type="EC" id="2.4.2.18" evidence="1"/>
<dbReference type="EMBL" id="CP000348">
    <property type="protein sequence ID" value="ABJ79563.1"/>
    <property type="molecule type" value="Genomic_DNA"/>
</dbReference>
<dbReference type="RefSeq" id="WP_011670602.1">
    <property type="nucleotide sequence ID" value="NC_008508.1"/>
</dbReference>
<dbReference type="SMR" id="Q04ZD2"/>
<dbReference type="KEGG" id="lbl:LBL_2151"/>
<dbReference type="HOGENOM" id="CLU_034315_2_1_12"/>
<dbReference type="UniPathway" id="UPA00035">
    <property type="reaction ID" value="UER00041"/>
</dbReference>
<dbReference type="GO" id="GO:0005829">
    <property type="term" value="C:cytosol"/>
    <property type="evidence" value="ECO:0007669"/>
    <property type="project" value="TreeGrafter"/>
</dbReference>
<dbReference type="GO" id="GO:0004048">
    <property type="term" value="F:anthranilate phosphoribosyltransferase activity"/>
    <property type="evidence" value="ECO:0007669"/>
    <property type="project" value="UniProtKB-UniRule"/>
</dbReference>
<dbReference type="GO" id="GO:0000287">
    <property type="term" value="F:magnesium ion binding"/>
    <property type="evidence" value="ECO:0007669"/>
    <property type="project" value="UniProtKB-UniRule"/>
</dbReference>
<dbReference type="GO" id="GO:0000162">
    <property type="term" value="P:L-tryptophan biosynthetic process"/>
    <property type="evidence" value="ECO:0007669"/>
    <property type="project" value="UniProtKB-UniRule"/>
</dbReference>
<dbReference type="FunFam" id="3.40.1030.10:FF:000002">
    <property type="entry name" value="Anthranilate phosphoribosyltransferase"/>
    <property type="match status" value="1"/>
</dbReference>
<dbReference type="Gene3D" id="3.40.1030.10">
    <property type="entry name" value="Nucleoside phosphorylase/phosphoribosyltransferase catalytic domain"/>
    <property type="match status" value="1"/>
</dbReference>
<dbReference type="Gene3D" id="1.20.970.10">
    <property type="entry name" value="Transferase, Pyrimidine Nucleoside Phosphorylase, Chain C"/>
    <property type="match status" value="1"/>
</dbReference>
<dbReference type="HAMAP" id="MF_00211">
    <property type="entry name" value="TrpD"/>
    <property type="match status" value="1"/>
</dbReference>
<dbReference type="InterPro" id="IPR005940">
    <property type="entry name" value="Anthranilate_Pribosyl_Tfrase"/>
</dbReference>
<dbReference type="InterPro" id="IPR000312">
    <property type="entry name" value="Glycosyl_Trfase_fam3"/>
</dbReference>
<dbReference type="InterPro" id="IPR017459">
    <property type="entry name" value="Glycosyl_Trfase_fam3_N_dom"/>
</dbReference>
<dbReference type="InterPro" id="IPR036320">
    <property type="entry name" value="Glycosyl_Trfase_fam3_N_dom_sf"/>
</dbReference>
<dbReference type="InterPro" id="IPR035902">
    <property type="entry name" value="Nuc_phospho_transferase"/>
</dbReference>
<dbReference type="NCBIfam" id="TIGR01245">
    <property type="entry name" value="trpD"/>
    <property type="match status" value="1"/>
</dbReference>
<dbReference type="PANTHER" id="PTHR43285">
    <property type="entry name" value="ANTHRANILATE PHOSPHORIBOSYLTRANSFERASE"/>
    <property type="match status" value="1"/>
</dbReference>
<dbReference type="PANTHER" id="PTHR43285:SF2">
    <property type="entry name" value="ANTHRANILATE PHOSPHORIBOSYLTRANSFERASE"/>
    <property type="match status" value="1"/>
</dbReference>
<dbReference type="Pfam" id="PF02885">
    <property type="entry name" value="Glycos_trans_3N"/>
    <property type="match status" value="1"/>
</dbReference>
<dbReference type="Pfam" id="PF00591">
    <property type="entry name" value="Glycos_transf_3"/>
    <property type="match status" value="1"/>
</dbReference>
<dbReference type="SUPFAM" id="SSF52418">
    <property type="entry name" value="Nucleoside phosphorylase/phosphoribosyltransferase catalytic domain"/>
    <property type="match status" value="1"/>
</dbReference>
<dbReference type="SUPFAM" id="SSF47648">
    <property type="entry name" value="Nucleoside phosphorylase/phosphoribosyltransferase N-terminal domain"/>
    <property type="match status" value="1"/>
</dbReference>